<sequence>MSLDNFSKGALAISGETTLLYQDIARSVQKEKGIKIVNFGIGQPDFPTFQKIRDEAKKALDGGFTAYTSAYGIDELRAKIASFLSSKYNTNISSKEVIITPGAKVSLYLAFLLYVNPGDEVIIFDPSYYSYPEVVKMLGGKPVYVKMKWREDTGFSLNLNDLENKITDKTKMVVLNNPHNPTGMVFDPKEIDQLIEIAKSKNLIVLSDEIYDYFVYEGKMRSVLEDPDWKNFSIYVNGFSKTFSMTGWRLGYVVAKENVIKKMSEIAANVYTCPTSFAQKAAVSAFDTFDDVKKMIDTFKKRRDVMYSELKKIKGIQVNKSQGAFYMFPYLGEILRKSGMSTKDFSVNLIKEKGVVTIPGEVFPLDAGKEFVRLSFAVDENVIKEGVQRMSEFINQLMRS</sequence>
<reference key="1">
    <citation type="journal article" date="2005" name="J. Bacteriol.">
        <title>The genome of Sulfolobus acidocaldarius, a model organism of the Crenarchaeota.</title>
        <authorList>
            <person name="Chen L."/>
            <person name="Bruegger K."/>
            <person name="Skovgaard M."/>
            <person name="Redder P."/>
            <person name="She Q."/>
            <person name="Torarinsson E."/>
            <person name="Greve B."/>
            <person name="Awayez M."/>
            <person name="Zibat A."/>
            <person name="Klenk H.-P."/>
            <person name="Garrett R.A."/>
        </authorList>
    </citation>
    <scope>NUCLEOTIDE SEQUENCE [LARGE SCALE GENOMIC DNA]</scope>
    <source>
        <strain>ATCC 33909 / DSM 639 / JCM 8929 / NBRC 15157 / NCIMB 11770</strain>
    </source>
</reference>
<proteinExistence type="inferred from homology"/>
<feature type="chain" id="PRO_0000123863" description="Aspartate aminotransferase">
    <location>
        <begin position="1"/>
        <end position="400"/>
    </location>
</feature>
<feature type="binding site" evidence="1">
    <location>
        <position position="42"/>
    </location>
    <ligand>
        <name>L-aspartate</name>
        <dbReference type="ChEBI" id="CHEBI:29991"/>
    </ligand>
</feature>
<feature type="binding site" evidence="1">
    <location>
        <position position="180"/>
    </location>
    <ligand>
        <name>L-aspartate</name>
        <dbReference type="ChEBI" id="CHEBI:29991"/>
    </ligand>
</feature>
<feature type="binding site" evidence="1">
    <location>
        <position position="373"/>
    </location>
    <ligand>
        <name>L-aspartate</name>
        <dbReference type="ChEBI" id="CHEBI:29991"/>
    </ligand>
</feature>
<feature type="modified residue" description="N6-(pyridoxal phosphate)lysine" evidence="1">
    <location>
        <position position="241"/>
    </location>
</feature>
<keyword id="KW-0032">Aminotransferase</keyword>
<keyword id="KW-0963">Cytoplasm</keyword>
<keyword id="KW-0663">Pyridoxal phosphate</keyword>
<keyword id="KW-1185">Reference proteome</keyword>
<keyword id="KW-0808">Transferase</keyword>
<organism>
    <name type="scientific">Sulfolobus acidocaldarius (strain ATCC 33909 / DSM 639 / JCM 8929 / NBRC 15157 / NCIMB 11770)</name>
    <dbReference type="NCBI Taxonomy" id="330779"/>
    <lineage>
        <taxon>Archaea</taxon>
        <taxon>Thermoproteota</taxon>
        <taxon>Thermoprotei</taxon>
        <taxon>Sulfolobales</taxon>
        <taxon>Sulfolobaceae</taxon>
        <taxon>Sulfolobus</taxon>
    </lineage>
</organism>
<evidence type="ECO:0000250" key="1"/>
<evidence type="ECO:0000305" key="2"/>
<dbReference type="EC" id="2.6.1.1"/>
<dbReference type="EMBL" id="CP000077">
    <property type="protein sequence ID" value="AAY80758.1"/>
    <property type="molecule type" value="Genomic_DNA"/>
</dbReference>
<dbReference type="RefSeq" id="WP_011278260.1">
    <property type="nucleotide sequence ID" value="NC_007181.1"/>
</dbReference>
<dbReference type="SMR" id="Q4J8X2"/>
<dbReference type="STRING" id="330779.Saci_1428"/>
<dbReference type="GeneID" id="14551928"/>
<dbReference type="KEGG" id="sai:Saci_1428"/>
<dbReference type="PATRIC" id="fig|330779.12.peg.1376"/>
<dbReference type="eggNOG" id="arCOG01130">
    <property type="taxonomic scope" value="Archaea"/>
</dbReference>
<dbReference type="HOGENOM" id="CLU_017584_4_3_2"/>
<dbReference type="Proteomes" id="UP000001018">
    <property type="component" value="Chromosome"/>
</dbReference>
<dbReference type="GO" id="GO:0005737">
    <property type="term" value="C:cytoplasm"/>
    <property type="evidence" value="ECO:0007669"/>
    <property type="project" value="UniProtKB-SubCell"/>
</dbReference>
<dbReference type="GO" id="GO:0004069">
    <property type="term" value="F:L-aspartate:2-oxoglutarate aminotransferase activity"/>
    <property type="evidence" value="ECO:0007669"/>
    <property type="project" value="UniProtKB-EC"/>
</dbReference>
<dbReference type="GO" id="GO:0030170">
    <property type="term" value="F:pyridoxal phosphate binding"/>
    <property type="evidence" value="ECO:0007669"/>
    <property type="project" value="InterPro"/>
</dbReference>
<dbReference type="GO" id="GO:0006520">
    <property type="term" value="P:amino acid metabolic process"/>
    <property type="evidence" value="ECO:0007669"/>
    <property type="project" value="InterPro"/>
</dbReference>
<dbReference type="GO" id="GO:0009058">
    <property type="term" value="P:biosynthetic process"/>
    <property type="evidence" value="ECO:0007669"/>
    <property type="project" value="InterPro"/>
</dbReference>
<dbReference type="CDD" id="cd00609">
    <property type="entry name" value="AAT_like"/>
    <property type="match status" value="1"/>
</dbReference>
<dbReference type="FunFam" id="3.40.640.10:FF:000033">
    <property type="entry name" value="Aspartate aminotransferase"/>
    <property type="match status" value="1"/>
</dbReference>
<dbReference type="Gene3D" id="3.90.1150.10">
    <property type="entry name" value="Aspartate Aminotransferase, domain 1"/>
    <property type="match status" value="1"/>
</dbReference>
<dbReference type="Gene3D" id="3.40.640.10">
    <property type="entry name" value="Type I PLP-dependent aspartate aminotransferase-like (Major domain)"/>
    <property type="match status" value="1"/>
</dbReference>
<dbReference type="InterPro" id="IPR004839">
    <property type="entry name" value="Aminotransferase_I/II_large"/>
</dbReference>
<dbReference type="InterPro" id="IPR050596">
    <property type="entry name" value="AspAT/PAT-like"/>
</dbReference>
<dbReference type="InterPro" id="IPR004838">
    <property type="entry name" value="NHTrfase_class1_PyrdxlP-BS"/>
</dbReference>
<dbReference type="InterPro" id="IPR015424">
    <property type="entry name" value="PyrdxlP-dep_Trfase"/>
</dbReference>
<dbReference type="InterPro" id="IPR015421">
    <property type="entry name" value="PyrdxlP-dep_Trfase_major"/>
</dbReference>
<dbReference type="InterPro" id="IPR015422">
    <property type="entry name" value="PyrdxlP-dep_Trfase_small"/>
</dbReference>
<dbReference type="PANTHER" id="PTHR46383">
    <property type="entry name" value="ASPARTATE AMINOTRANSFERASE"/>
    <property type="match status" value="1"/>
</dbReference>
<dbReference type="PANTHER" id="PTHR46383:SF1">
    <property type="entry name" value="ASPARTATE AMINOTRANSFERASE"/>
    <property type="match status" value="1"/>
</dbReference>
<dbReference type="Pfam" id="PF00155">
    <property type="entry name" value="Aminotran_1_2"/>
    <property type="match status" value="1"/>
</dbReference>
<dbReference type="SUPFAM" id="SSF53383">
    <property type="entry name" value="PLP-dependent transferases"/>
    <property type="match status" value="1"/>
</dbReference>
<dbReference type="PROSITE" id="PS00105">
    <property type="entry name" value="AA_TRANSFER_CLASS_1"/>
    <property type="match status" value="1"/>
</dbReference>
<comment type="catalytic activity">
    <reaction>
        <text>L-aspartate + 2-oxoglutarate = oxaloacetate + L-glutamate</text>
        <dbReference type="Rhea" id="RHEA:21824"/>
        <dbReference type="ChEBI" id="CHEBI:16452"/>
        <dbReference type="ChEBI" id="CHEBI:16810"/>
        <dbReference type="ChEBI" id="CHEBI:29985"/>
        <dbReference type="ChEBI" id="CHEBI:29991"/>
        <dbReference type="EC" id="2.6.1.1"/>
    </reaction>
</comment>
<comment type="cofactor">
    <cofactor evidence="1">
        <name>pyridoxal 5'-phosphate</name>
        <dbReference type="ChEBI" id="CHEBI:597326"/>
    </cofactor>
</comment>
<comment type="subunit">
    <text evidence="1">Homodimer.</text>
</comment>
<comment type="subcellular location">
    <subcellularLocation>
        <location evidence="1">Cytoplasm</location>
    </subcellularLocation>
</comment>
<comment type="similarity">
    <text evidence="2">Belongs to the class-I pyridoxal-phosphate-dependent aminotransferase family.</text>
</comment>
<gene>
    <name type="primary">aspC</name>
    <name type="ordered locus">Saci_1428</name>
</gene>
<accession>Q4J8X2</accession>
<protein>
    <recommendedName>
        <fullName>Aspartate aminotransferase</fullName>
        <shortName>AspAT</shortName>
        <ecNumber>2.6.1.1</ecNumber>
    </recommendedName>
    <alternativeName>
        <fullName>Transaminase A</fullName>
    </alternativeName>
</protein>
<name>AAT_SULAC</name>